<feature type="chain" id="PRO_0000407891" description="Ribonuclease VapC35">
    <location>
        <begin position="1"/>
        <end position="135"/>
    </location>
</feature>
<feature type="domain" description="PINc" evidence="1">
    <location>
        <begin position="2"/>
        <end position="123"/>
    </location>
</feature>
<feature type="binding site" evidence="1">
    <location>
        <position position="5"/>
    </location>
    <ligand>
        <name>Mg(2+)</name>
        <dbReference type="ChEBI" id="CHEBI:18420"/>
    </ligand>
</feature>
<feature type="binding site" evidence="1">
    <location>
        <position position="91"/>
    </location>
    <ligand>
        <name>Mg(2+)</name>
        <dbReference type="ChEBI" id="CHEBI:18420"/>
    </ligand>
</feature>
<organism>
    <name type="scientific">Mycobacterium tuberculosis (strain ATCC 25618 / H37Rv)</name>
    <dbReference type="NCBI Taxonomy" id="83332"/>
    <lineage>
        <taxon>Bacteria</taxon>
        <taxon>Bacillati</taxon>
        <taxon>Actinomycetota</taxon>
        <taxon>Actinomycetes</taxon>
        <taxon>Mycobacteriales</taxon>
        <taxon>Mycobacteriaceae</taxon>
        <taxon>Mycobacterium</taxon>
        <taxon>Mycobacterium tuberculosis complex</taxon>
    </lineage>
</organism>
<proteinExistence type="evidence at protein level"/>
<accession>P9WF67</accession>
<accession>L0TAX9</accession>
<accession>P95252</accession>
<accession>Q7D7P4</accession>
<keyword id="KW-0378">Hydrolase</keyword>
<keyword id="KW-0460">Magnesium</keyword>
<keyword id="KW-0479">Metal-binding</keyword>
<keyword id="KW-0540">Nuclease</keyword>
<keyword id="KW-1185">Reference proteome</keyword>
<keyword id="KW-1277">Toxin-antitoxin system</keyword>
<gene>
    <name evidence="1" type="primary">vapC35</name>
    <name type="ordered locus">Rv1962c</name>
</gene>
<comment type="function">
    <text evidence="1 2">Toxic component of a type II toxin-antitoxin (TA) system. An RNase (By similarity). Upon expression in M.smegmatis inhibits colony formation. Its toxic effect is neutralized by coexpression with cognate antitoxin VapB35.</text>
</comment>
<comment type="cofactor">
    <cofactor evidence="1">
        <name>Mg(2+)</name>
        <dbReference type="ChEBI" id="CHEBI:18420"/>
    </cofactor>
</comment>
<comment type="similarity">
    <text evidence="1">Belongs to the PINc/VapC protein family.</text>
</comment>
<evidence type="ECO:0000255" key="1">
    <source>
        <dbReference type="HAMAP-Rule" id="MF_00265"/>
    </source>
</evidence>
<evidence type="ECO:0000269" key="2">
    <source>
    </source>
</evidence>
<protein>
    <recommendedName>
        <fullName evidence="1">Ribonuclease VapC35</fullName>
        <shortName evidence="1">RNase VapC35</shortName>
        <ecNumber evidence="1">3.1.-.-</ecNumber>
    </recommendedName>
    <alternativeName>
        <fullName evidence="1">Toxin VapC35</fullName>
    </alternativeName>
</protein>
<dbReference type="EC" id="3.1.-.-" evidence="1"/>
<dbReference type="EMBL" id="AL123456">
    <property type="protein sequence ID" value="CCP44730.1"/>
    <property type="molecule type" value="Genomic_DNA"/>
</dbReference>
<dbReference type="PIR" id="F70639">
    <property type="entry name" value="F70639"/>
</dbReference>
<dbReference type="RefSeq" id="NP_216478.1">
    <property type="nucleotide sequence ID" value="NC_000962.3"/>
</dbReference>
<dbReference type="RefSeq" id="WP_003409913.1">
    <property type="nucleotide sequence ID" value="NZ_NVQJ01000048.1"/>
</dbReference>
<dbReference type="SMR" id="P9WF67"/>
<dbReference type="STRING" id="83332.Rv1962c"/>
<dbReference type="PaxDb" id="83332-Rv1962c"/>
<dbReference type="DNASU" id="885952"/>
<dbReference type="GeneID" id="885952"/>
<dbReference type="KEGG" id="mtu:Rv1962c"/>
<dbReference type="KEGG" id="mtv:RVBD_1962c"/>
<dbReference type="TubercuList" id="Rv1962c"/>
<dbReference type="eggNOG" id="COG1848">
    <property type="taxonomic scope" value="Bacteria"/>
</dbReference>
<dbReference type="InParanoid" id="P9WF67"/>
<dbReference type="OrthoDB" id="4750219at2"/>
<dbReference type="PhylomeDB" id="P9WF67"/>
<dbReference type="Proteomes" id="UP000001584">
    <property type="component" value="Chromosome"/>
</dbReference>
<dbReference type="GO" id="GO:0000287">
    <property type="term" value="F:magnesium ion binding"/>
    <property type="evidence" value="ECO:0007669"/>
    <property type="project" value="UniProtKB-UniRule"/>
</dbReference>
<dbReference type="GO" id="GO:0004540">
    <property type="term" value="F:RNA nuclease activity"/>
    <property type="evidence" value="ECO:0007669"/>
    <property type="project" value="InterPro"/>
</dbReference>
<dbReference type="GO" id="GO:0045926">
    <property type="term" value="P:negative regulation of growth"/>
    <property type="evidence" value="ECO:0000315"/>
    <property type="project" value="MTBBASE"/>
</dbReference>
<dbReference type="CDD" id="cd09874">
    <property type="entry name" value="PIN_MT3492-like"/>
    <property type="match status" value="1"/>
</dbReference>
<dbReference type="Gene3D" id="3.40.50.1010">
    <property type="entry name" value="5'-nuclease"/>
    <property type="match status" value="1"/>
</dbReference>
<dbReference type="HAMAP" id="MF_00265">
    <property type="entry name" value="VapC_Nob1"/>
    <property type="match status" value="1"/>
</dbReference>
<dbReference type="InterPro" id="IPR029060">
    <property type="entry name" value="PIN-like_dom_sf"/>
</dbReference>
<dbReference type="InterPro" id="IPR002716">
    <property type="entry name" value="PIN_dom"/>
</dbReference>
<dbReference type="InterPro" id="IPR022907">
    <property type="entry name" value="VapC_family"/>
</dbReference>
<dbReference type="Pfam" id="PF01850">
    <property type="entry name" value="PIN"/>
    <property type="match status" value="1"/>
</dbReference>
<dbReference type="SUPFAM" id="SSF88723">
    <property type="entry name" value="PIN domain-like"/>
    <property type="match status" value="1"/>
</dbReference>
<sequence length="135" mass="14521">MIYLETSALVKLIRIEVESDALADWLDDRTELRWITSALTEVELSRAIRAVSPEGLPAVPSVLARLDRFEIDAVIRSTAAAYPNPALRSLDAIHLATAQTAGSVAPLTALVTYDNRLKEAAEALSLAVVAPGQAR</sequence>
<reference key="1">
    <citation type="journal article" date="1998" name="Nature">
        <title>Deciphering the biology of Mycobacterium tuberculosis from the complete genome sequence.</title>
        <authorList>
            <person name="Cole S.T."/>
            <person name="Brosch R."/>
            <person name="Parkhill J."/>
            <person name="Garnier T."/>
            <person name="Churcher C.M."/>
            <person name="Harris D.E."/>
            <person name="Gordon S.V."/>
            <person name="Eiglmeier K."/>
            <person name="Gas S."/>
            <person name="Barry C.E. III"/>
            <person name="Tekaia F."/>
            <person name="Badcock K."/>
            <person name="Basham D."/>
            <person name="Brown D."/>
            <person name="Chillingworth T."/>
            <person name="Connor R."/>
            <person name="Davies R.M."/>
            <person name="Devlin K."/>
            <person name="Feltwell T."/>
            <person name="Gentles S."/>
            <person name="Hamlin N."/>
            <person name="Holroyd S."/>
            <person name="Hornsby T."/>
            <person name="Jagels K."/>
            <person name="Krogh A."/>
            <person name="McLean J."/>
            <person name="Moule S."/>
            <person name="Murphy L.D."/>
            <person name="Oliver S."/>
            <person name="Osborne J."/>
            <person name="Quail M.A."/>
            <person name="Rajandream M.A."/>
            <person name="Rogers J."/>
            <person name="Rutter S."/>
            <person name="Seeger K."/>
            <person name="Skelton S."/>
            <person name="Squares S."/>
            <person name="Squares R."/>
            <person name="Sulston J.E."/>
            <person name="Taylor K."/>
            <person name="Whitehead S."/>
            <person name="Barrell B.G."/>
        </authorList>
    </citation>
    <scope>NUCLEOTIDE SEQUENCE [LARGE SCALE GENOMIC DNA]</scope>
    <source>
        <strain>ATCC 25618 / H37Rv</strain>
    </source>
</reference>
<reference key="2">
    <citation type="journal article" date="2009" name="PLoS Genet.">
        <title>Comprehensive functional analysis of Mycobacterium tuberculosis toxin-antitoxin systems: implications for pathogenesis, stress responses, and evolution.</title>
        <authorList>
            <person name="Ramage H.R."/>
            <person name="Connolly L.E."/>
            <person name="Cox J.S."/>
        </authorList>
    </citation>
    <scope>EXPRESSION IN M.SMEGMATIS</scope>
    <scope>FUNCTION AS A TOXIN</scope>
    <source>
        <strain>ATCC 35801 / TMC 107 / Erdman</strain>
    </source>
</reference>
<reference key="3">
    <citation type="journal article" date="2011" name="Mol. Cell. Proteomics">
        <title>Proteogenomic analysis of Mycobacterium tuberculosis by high resolution mass spectrometry.</title>
        <authorList>
            <person name="Kelkar D.S."/>
            <person name="Kumar D."/>
            <person name="Kumar P."/>
            <person name="Balakrishnan L."/>
            <person name="Muthusamy B."/>
            <person name="Yadav A.K."/>
            <person name="Shrivastava P."/>
            <person name="Marimuthu A."/>
            <person name="Anand S."/>
            <person name="Sundaram H."/>
            <person name="Kingsbury R."/>
            <person name="Harsha H.C."/>
            <person name="Nair B."/>
            <person name="Prasad T.S."/>
            <person name="Chauhan D.S."/>
            <person name="Katoch K."/>
            <person name="Katoch V.M."/>
            <person name="Kumar P."/>
            <person name="Chaerkady R."/>
            <person name="Ramachandran S."/>
            <person name="Dash D."/>
            <person name="Pandey A."/>
        </authorList>
    </citation>
    <scope>IDENTIFICATION BY MASS SPECTROMETRY [LARGE SCALE ANALYSIS]</scope>
    <source>
        <strain>ATCC 25618 / H37Rv</strain>
    </source>
</reference>
<name>VPC35_MYCTU</name>